<dbReference type="EMBL" id="U27343">
    <property type="protein sequence ID" value="AAB19235.1"/>
    <property type="status" value="ALT_INIT"/>
    <property type="molecule type" value="Genomic_DNA"/>
</dbReference>
<dbReference type="EMBL" id="AL009126">
    <property type="protein sequence ID" value="CAB13577.2"/>
    <property type="molecule type" value="Genomic_DNA"/>
</dbReference>
<dbReference type="PIR" id="C69663">
    <property type="entry name" value="C69663"/>
</dbReference>
<dbReference type="RefSeq" id="NP_389586.2">
    <property type="nucleotide sequence ID" value="NC_000964.3"/>
</dbReference>
<dbReference type="RefSeq" id="WP_003244841.1">
    <property type="nucleotide sequence ID" value="NZ_OZ025638.1"/>
</dbReference>
<dbReference type="SMR" id="P49849"/>
<dbReference type="FunCoup" id="P49849">
    <property type="interactions" value="618"/>
</dbReference>
<dbReference type="STRING" id="224308.BSU17040"/>
<dbReference type="PaxDb" id="224308-BSU17040"/>
<dbReference type="EnsemblBacteria" id="CAB13577">
    <property type="protein sequence ID" value="CAB13577"/>
    <property type="gene ID" value="BSU_17040"/>
</dbReference>
<dbReference type="GeneID" id="939501"/>
<dbReference type="KEGG" id="bsu:BSU17040"/>
<dbReference type="PATRIC" id="fig|224308.179.peg.1845"/>
<dbReference type="eggNOG" id="COG0249">
    <property type="taxonomic scope" value="Bacteria"/>
</dbReference>
<dbReference type="InParanoid" id="P49849"/>
<dbReference type="OrthoDB" id="9802448at2"/>
<dbReference type="PhylomeDB" id="P49849"/>
<dbReference type="BioCyc" id="BSUB:BSU17040-MONOMER"/>
<dbReference type="Proteomes" id="UP000001570">
    <property type="component" value="Chromosome"/>
</dbReference>
<dbReference type="GO" id="GO:0005829">
    <property type="term" value="C:cytosol"/>
    <property type="evidence" value="ECO:0000318"/>
    <property type="project" value="GO_Central"/>
</dbReference>
<dbReference type="GO" id="GO:0005524">
    <property type="term" value="F:ATP binding"/>
    <property type="evidence" value="ECO:0007669"/>
    <property type="project" value="UniProtKB-UniRule"/>
</dbReference>
<dbReference type="GO" id="GO:0140664">
    <property type="term" value="F:ATP-dependent DNA damage sensor activity"/>
    <property type="evidence" value="ECO:0007669"/>
    <property type="project" value="InterPro"/>
</dbReference>
<dbReference type="GO" id="GO:0003684">
    <property type="term" value="F:damaged DNA binding"/>
    <property type="evidence" value="ECO:0007669"/>
    <property type="project" value="UniProtKB-UniRule"/>
</dbReference>
<dbReference type="GO" id="GO:0030983">
    <property type="term" value="F:mismatched DNA binding"/>
    <property type="evidence" value="ECO:0000318"/>
    <property type="project" value="GO_Central"/>
</dbReference>
<dbReference type="GO" id="GO:0006298">
    <property type="term" value="P:mismatch repair"/>
    <property type="evidence" value="ECO:0000318"/>
    <property type="project" value="GO_Central"/>
</dbReference>
<dbReference type="CDD" id="cd03284">
    <property type="entry name" value="ABC_MutS1"/>
    <property type="match status" value="1"/>
</dbReference>
<dbReference type="FunFam" id="1.10.1420.10:FF:000007">
    <property type="entry name" value="DNA mismatch repair protein MutS"/>
    <property type="match status" value="1"/>
</dbReference>
<dbReference type="FunFam" id="3.40.1170.10:FF:000001">
    <property type="entry name" value="DNA mismatch repair protein MutS"/>
    <property type="match status" value="1"/>
</dbReference>
<dbReference type="FunFam" id="3.40.50.300:FF:000896">
    <property type="entry name" value="DNA mismatch repair protein MutS"/>
    <property type="match status" value="1"/>
</dbReference>
<dbReference type="Gene3D" id="1.10.1420.10">
    <property type="match status" value="2"/>
</dbReference>
<dbReference type="Gene3D" id="3.40.1170.10">
    <property type="entry name" value="DNA repair protein MutS, domain I"/>
    <property type="match status" value="1"/>
</dbReference>
<dbReference type="Gene3D" id="3.30.420.110">
    <property type="entry name" value="MutS, connector domain"/>
    <property type="match status" value="1"/>
</dbReference>
<dbReference type="Gene3D" id="3.40.50.300">
    <property type="entry name" value="P-loop containing nucleotide triphosphate hydrolases"/>
    <property type="match status" value="1"/>
</dbReference>
<dbReference type="HAMAP" id="MF_00096">
    <property type="entry name" value="MutS"/>
    <property type="match status" value="1"/>
</dbReference>
<dbReference type="InterPro" id="IPR005748">
    <property type="entry name" value="DNA_mismatch_repair_MutS"/>
</dbReference>
<dbReference type="InterPro" id="IPR007695">
    <property type="entry name" value="DNA_mismatch_repair_MutS-lik_N"/>
</dbReference>
<dbReference type="InterPro" id="IPR017261">
    <property type="entry name" value="DNA_mismatch_repair_MutS/MSH"/>
</dbReference>
<dbReference type="InterPro" id="IPR000432">
    <property type="entry name" value="DNA_mismatch_repair_MutS_C"/>
</dbReference>
<dbReference type="InterPro" id="IPR007861">
    <property type="entry name" value="DNA_mismatch_repair_MutS_clamp"/>
</dbReference>
<dbReference type="InterPro" id="IPR007696">
    <property type="entry name" value="DNA_mismatch_repair_MutS_core"/>
</dbReference>
<dbReference type="InterPro" id="IPR016151">
    <property type="entry name" value="DNA_mismatch_repair_MutS_N"/>
</dbReference>
<dbReference type="InterPro" id="IPR036187">
    <property type="entry name" value="DNA_mismatch_repair_MutS_sf"/>
</dbReference>
<dbReference type="InterPro" id="IPR007860">
    <property type="entry name" value="DNA_mmatch_repair_MutS_con_dom"/>
</dbReference>
<dbReference type="InterPro" id="IPR045076">
    <property type="entry name" value="MutS"/>
</dbReference>
<dbReference type="InterPro" id="IPR036678">
    <property type="entry name" value="MutS_con_dom_sf"/>
</dbReference>
<dbReference type="InterPro" id="IPR027417">
    <property type="entry name" value="P-loop_NTPase"/>
</dbReference>
<dbReference type="NCBIfam" id="TIGR01070">
    <property type="entry name" value="mutS1"/>
    <property type="match status" value="1"/>
</dbReference>
<dbReference type="NCBIfam" id="NF003810">
    <property type="entry name" value="PRK05399.1"/>
    <property type="match status" value="1"/>
</dbReference>
<dbReference type="PANTHER" id="PTHR11361:SF34">
    <property type="entry name" value="DNA MISMATCH REPAIR PROTEIN MSH1, MITOCHONDRIAL"/>
    <property type="match status" value="1"/>
</dbReference>
<dbReference type="PANTHER" id="PTHR11361">
    <property type="entry name" value="DNA MISMATCH REPAIR PROTEIN MUTS FAMILY MEMBER"/>
    <property type="match status" value="1"/>
</dbReference>
<dbReference type="Pfam" id="PF01624">
    <property type="entry name" value="MutS_I"/>
    <property type="match status" value="1"/>
</dbReference>
<dbReference type="Pfam" id="PF05188">
    <property type="entry name" value="MutS_II"/>
    <property type="match status" value="1"/>
</dbReference>
<dbReference type="Pfam" id="PF05192">
    <property type="entry name" value="MutS_III"/>
    <property type="match status" value="1"/>
</dbReference>
<dbReference type="Pfam" id="PF05190">
    <property type="entry name" value="MutS_IV"/>
    <property type="match status" value="1"/>
</dbReference>
<dbReference type="Pfam" id="PF00488">
    <property type="entry name" value="MutS_V"/>
    <property type="match status" value="1"/>
</dbReference>
<dbReference type="PIRSF" id="PIRSF037677">
    <property type="entry name" value="DNA_mis_repair_Msh6"/>
    <property type="match status" value="1"/>
</dbReference>
<dbReference type="SMART" id="SM00534">
    <property type="entry name" value="MUTSac"/>
    <property type="match status" value="1"/>
</dbReference>
<dbReference type="SMART" id="SM00533">
    <property type="entry name" value="MUTSd"/>
    <property type="match status" value="1"/>
</dbReference>
<dbReference type="SUPFAM" id="SSF55271">
    <property type="entry name" value="DNA repair protein MutS, domain I"/>
    <property type="match status" value="1"/>
</dbReference>
<dbReference type="SUPFAM" id="SSF53150">
    <property type="entry name" value="DNA repair protein MutS, domain II"/>
    <property type="match status" value="1"/>
</dbReference>
<dbReference type="SUPFAM" id="SSF48334">
    <property type="entry name" value="DNA repair protein MutS, domain III"/>
    <property type="match status" value="1"/>
</dbReference>
<dbReference type="SUPFAM" id="SSF52540">
    <property type="entry name" value="P-loop containing nucleoside triphosphate hydrolases"/>
    <property type="match status" value="1"/>
</dbReference>
<dbReference type="PROSITE" id="PS00486">
    <property type="entry name" value="DNA_MISMATCH_REPAIR_2"/>
    <property type="match status" value="1"/>
</dbReference>
<keyword id="KW-0067">ATP-binding</keyword>
<keyword id="KW-0227">DNA damage</keyword>
<keyword id="KW-0234">DNA repair</keyword>
<keyword id="KW-0238">DNA-binding</keyword>
<keyword id="KW-0547">Nucleotide-binding</keyword>
<keyword id="KW-1185">Reference proteome</keyword>
<organism>
    <name type="scientific">Bacillus subtilis (strain 168)</name>
    <dbReference type="NCBI Taxonomy" id="224308"/>
    <lineage>
        <taxon>Bacteria</taxon>
        <taxon>Bacillati</taxon>
        <taxon>Bacillota</taxon>
        <taxon>Bacilli</taxon>
        <taxon>Bacillales</taxon>
        <taxon>Bacillaceae</taxon>
        <taxon>Bacillus</taxon>
    </lineage>
</organism>
<gene>
    <name evidence="5" type="primary">mutS</name>
    <name type="ordered locus">BSU17040</name>
</gene>
<evidence type="ECO:0000250" key="1"/>
<evidence type="ECO:0000255" key="2"/>
<evidence type="ECO:0000269" key="3">
    <source>
    </source>
</evidence>
<evidence type="ECO:0000269" key="4">
    <source>
    </source>
</evidence>
<evidence type="ECO:0000303" key="5">
    <source>
    </source>
</evidence>
<evidence type="ECO:0000305" key="6"/>
<evidence type="ECO:0000305" key="7">
    <source>
    </source>
</evidence>
<sequence>MAGYTPMIQQYLKIKAEHQDAFLFFRLGDFYEMFFEDAKKASQELEITLTSRDGGAAEKIPMCGVPYHSASAYIEQLIKKGYKVAICEQTEDPKAAKGVVKREVVQLITPGTVMDGKGIHESENNFIASVSACSNGYGLALSDLTTGENLAVLIERLEDVISEIYSVGAREIVVSGSLDADTVAQLRERCGATISIEDGETDEHVTIIEHLNNEDITKTFLRLYTYLKRTQKRSLDHLQPVQVYELEEAMKIDLYSKRNLELTETIRSKNKKGSLLWLLDETKTAMGGRLLKQWIDRPLIRVNQIEERQEMVETLMSHFFEREDLRERLKEVYDLERLAGRVAFGNVNARDLIQLKESLKQVPGIKQLVASLAHDKAKERAKRIDPCGDVLELLEEALYENPPLSVKEGNLIKDGYNQKLDEYRDASRNGKDWIARLEQQEREYTGIRSLKVGFNKVFGYYIEVTKANLHLLEEGRYERKQTLTNAERYITPELKEKEALILEAENNICELEYELFTELREKVKQYIPRLQQLAKQMSELDALQCFATISENRHYTKPEFSKDEVEVIEGRHPVVEKVMDSQEYVPNNCMMGDNRQMLLITGPNMSGKSTYMRQIALISIMAQIGCFVPAKKAVLPIFDQIFTRIGAADDLISGQSTFMVEMLEAKNAIVNATKNSLILFDEIGRGTSTYDGMALAQAIIEYVHDHIGAKTLFSTHYHELTVLEDKLPQLKNVHVRAEEYNGTVVFLHQIKEGAADKSYGIHVAQLAELPGDLIARAQDILKELEHSGNKPEVPVQKPQVKEEPAQLSFFDEAEKPAETPKLSKKEKQVIDAFKSLNILDMTPLEAMNEMYKLQKKLH</sequence>
<accession>P49849</accession>
<protein>
    <recommendedName>
        <fullName>DNA mismatch repair protein MutS</fullName>
    </recommendedName>
</protein>
<proteinExistence type="evidence at transcript level"/>
<name>MUTS_BACSU</name>
<reference key="1">
    <citation type="journal article" date="1996" name="Microbiology">
        <title>Bacillus subtilis mutS mutL operon: identification, nucleotide sequence and mutagenesis.</title>
        <authorList>
            <person name="Ginetti F."/>
            <person name="Perego M."/>
            <person name="Albertini A.M."/>
            <person name="Galizzi A."/>
        </authorList>
    </citation>
    <scope>NUCLEOTIDE SEQUENCE [GENOMIC DNA]</scope>
    <scope>INDUCTION</scope>
    <scope>DISRUPTION PHENOTYPE</scope>
    <source>
        <strain>168</strain>
    </source>
</reference>
<reference key="2">
    <citation type="journal article" date="1997" name="Nature">
        <title>The complete genome sequence of the Gram-positive bacterium Bacillus subtilis.</title>
        <authorList>
            <person name="Kunst F."/>
            <person name="Ogasawara N."/>
            <person name="Moszer I."/>
            <person name="Albertini A.M."/>
            <person name="Alloni G."/>
            <person name="Azevedo V."/>
            <person name="Bertero M.G."/>
            <person name="Bessieres P."/>
            <person name="Bolotin A."/>
            <person name="Borchert S."/>
            <person name="Borriss R."/>
            <person name="Boursier L."/>
            <person name="Brans A."/>
            <person name="Braun M."/>
            <person name="Brignell S.C."/>
            <person name="Bron S."/>
            <person name="Brouillet S."/>
            <person name="Bruschi C.V."/>
            <person name="Caldwell B."/>
            <person name="Capuano V."/>
            <person name="Carter N.M."/>
            <person name="Choi S.-K."/>
            <person name="Codani J.-J."/>
            <person name="Connerton I.F."/>
            <person name="Cummings N.J."/>
            <person name="Daniel R.A."/>
            <person name="Denizot F."/>
            <person name="Devine K.M."/>
            <person name="Duesterhoeft A."/>
            <person name="Ehrlich S.D."/>
            <person name="Emmerson P.T."/>
            <person name="Entian K.-D."/>
            <person name="Errington J."/>
            <person name="Fabret C."/>
            <person name="Ferrari E."/>
            <person name="Foulger D."/>
            <person name="Fritz C."/>
            <person name="Fujita M."/>
            <person name="Fujita Y."/>
            <person name="Fuma S."/>
            <person name="Galizzi A."/>
            <person name="Galleron N."/>
            <person name="Ghim S.-Y."/>
            <person name="Glaser P."/>
            <person name="Goffeau A."/>
            <person name="Golightly E.J."/>
            <person name="Grandi G."/>
            <person name="Guiseppi G."/>
            <person name="Guy B.J."/>
            <person name="Haga K."/>
            <person name="Haiech J."/>
            <person name="Harwood C.R."/>
            <person name="Henaut A."/>
            <person name="Hilbert H."/>
            <person name="Holsappel S."/>
            <person name="Hosono S."/>
            <person name="Hullo M.-F."/>
            <person name="Itaya M."/>
            <person name="Jones L.-M."/>
            <person name="Joris B."/>
            <person name="Karamata D."/>
            <person name="Kasahara Y."/>
            <person name="Klaerr-Blanchard M."/>
            <person name="Klein C."/>
            <person name="Kobayashi Y."/>
            <person name="Koetter P."/>
            <person name="Koningstein G."/>
            <person name="Krogh S."/>
            <person name="Kumano M."/>
            <person name="Kurita K."/>
            <person name="Lapidus A."/>
            <person name="Lardinois S."/>
            <person name="Lauber J."/>
            <person name="Lazarevic V."/>
            <person name="Lee S.-M."/>
            <person name="Levine A."/>
            <person name="Liu H."/>
            <person name="Masuda S."/>
            <person name="Mauel C."/>
            <person name="Medigue C."/>
            <person name="Medina N."/>
            <person name="Mellado R.P."/>
            <person name="Mizuno M."/>
            <person name="Moestl D."/>
            <person name="Nakai S."/>
            <person name="Noback M."/>
            <person name="Noone D."/>
            <person name="O'Reilly M."/>
            <person name="Ogawa K."/>
            <person name="Ogiwara A."/>
            <person name="Oudega B."/>
            <person name="Park S.-H."/>
            <person name="Parro V."/>
            <person name="Pohl T.M."/>
            <person name="Portetelle D."/>
            <person name="Porwollik S."/>
            <person name="Prescott A.M."/>
            <person name="Presecan E."/>
            <person name="Pujic P."/>
            <person name="Purnelle B."/>
            <person name="Rapoport G."/>
            <person name="Rey M."/>
            <person name="Reynolds S."/>
            <person name="Rieger M."/>
            <person name="Rivolta C."/>
            <person name="Rocha E."/>
            <person name="Roche B."/>
            <person name="Rose M."/>
            <person name="Sadaie Y."/>
            <person name="Sato T."/>
            <person name="Scanlan E."/>
            <person name="Schleich S."/>
            <person name="Schroeter R."/>
            <person name="Scoffone F."/>
            <person name="Sekiguchi J."/>
            <person name="Sekowska A."/>
            <person name="Seror S.J."/>
            <person name="Serror P."/>
            <person name="Shin B.-S."/>
            <person name="Soldo B."/>
            <person name="Sorokin A."/>
            <person name="Tacconi E."/>
            <person name="Takagi T."/>
            <person name="Takahashi H."/>
            <person name="Takemaru K."/>
            <person name="Takeuchi M."/>
            <person name="Tamakoshi A."/>
            <person name="Tanaka T."/>
            <person name="Terpstra P."/>
            <person name="Tognoni A."/>
            <person name="Tosato V."/>
            <person name="Uchiyama S."/>
            <person name="Vandenbol M."/>
            <person name="Vannier F."/>
            <person name="Vassarotti A."/>
            <person name="Viari A."/>
            <person name="Wambutt R."/>
            <person name="Wedler E."/>
            <person name="Wedler H."/>
            <person name="Weitzenegger T."/>
            <person name="Winters P."/>
            <person name="Wipat A."/>
            <person name="Yamamoto H."/>
            <person name="Yamane K."/>
            <person name="Yasumoto K."/>
            <person name="Yata K."/>
            <person name="Yoshida K."/>
            <person name="Yoshikawa H.-F."/>
            <person name="Zumstein E."/>
            <person name="Yoshikawa H."/>
            <person name="Danchin A."/>
        </authorList>
    </citation>
    <scope>NUCLEOTIDE SEQUENCE [LARGE SCALE GENOMIC DNA]</scope>
    <source>
        <strain>168</strain>
    </source>
</reference>
<reference key="3">
    <citation type="journal article" date="2009" name="Microbiology">
        <title>From a consortium sequence to a unified sequence: the Bacillus subtilis 168 reference genome a decade later.</title>
        <authorList>
            <person name="Barbe V."/>
            <person name="Cruveiller S."/>
            <person name="Kunst F."/>
            <person name="Lenoble P."/>
            <person name="Meurice G."/>
            <person name="Sekowska A."/>
            <person name="Vallenet D."/>
            <person name="Wang T."/>
            <person name="Moszer I."/>
            <person name="Medigue C."/>
            <person name="Danchin A."/>
        </authorList>
    </citation>
    <scope>SEQUENCE REVISION TO 480-481</scope>
</reference>
<reference key="4">
    <citation type="journal article" date="2000" name="J. Gen. Appl. Microbiol.">
        <title>Genetic analysis of Bacillus subtilis mutator genes.</title>
        <authorList>
            <person name="Sasaki M."/>
            <person name="Yonemura Y."/>
            <person name="Kurusu Y."/>
        </authorList>
    </citation>
    <scope>DISRUPTION PHENOTYPE</scope>
    <source>
        <strain>168</strain>
    </source>
</reference>
<reference key="5">
    <citation type="journal article" date="2009" name="J. Bacteriol.">
        <title>Defects in the error prevention oxidized guanine system potentiate stationary-phase mutagenesis in Bacillus subtilis.</title>
        <authorList>
            <person name="Vidales L.E."/>
            <person name="Cardenas L.C."/>
            <person name="Robleto E."/>
            <person name="Yasbin R.E."/>
            <person name="Pedraza-Reyes M."/>
        </authorList>
    </citation>
    <scope>POSSIBLE ROLE IN STATIONARY-PHASE-INDUCED MUTAGENESIS REPAIR</scope>
    <source>
        <strain>168 / YB955</strain>
    </source>
</reference>
<comment type="function">
    <text evidence="1">This protein is involved in the repair of mismatches in DNA. It is possible that it carries out the mismatch recognition step. This protein has a weak ATPase activity (By similarity). Overexpression of mutSL partially suppresses the high spontaneous mutation frequency of a ytkD/mutM/mutY triple disruption which lacks the system required to prevent damage by oxidized guanine (8-oxo-dGTP). This suggests that MutSL also functions to repair mismatches due to oxidative stress in both growing and stationary phase cells.</text>
</comment>
<comment type="induction">
    <text evidence="4 7">Constitutively transcribed during vegetative growth, with a slight increase during stationary phase (PubMed:8760914). Probably part of the mutS-mutL operon (Probable) (PubMed:8760914).</text>
</comment>
<comment type="disruption phenotype">
    <text evidence="3 4">Double mutS-mutL deletion strain have 40-60 times greater spontaneous mutation rate (PubMed:8760914). Cells lacking this gene have a 225-fold increased spontaneous mutation frequency (PubMed:12483591). A double mutS/mutL and a triple mutS/mutL/nth disruption have a 200 to 280-fold increased spontaneous mutation frequency (PubMed:12483591).</text>
</comment>
<comment type="similarity">
    <text evidence="6">Belongs to the DNA mismatch repair MutS family.</text>
</comment>
<comment type="sequence caution" evidence="6">
    <conflict type="erroneous initiation">
        <sequence resource="EMBL-CDS" id="AAB19235"/>
    </conflict>
    <text>Truncated N-terminus.</text>
</comment>
<feature type="chain" id="PRO_0000115070" description="DNA mismatch repair protein MutS">
    <location>
        <begin position="1"/>
        <end position="858"/>
    </location>
</feature>
<feature type="binding site" evidence="2">
    <location>
        <begin position="602"/>
        <end position="609"/>
    </location>
    <ligand>
        <name>ATP</name>
        <dbReference type="ChEBI" id="CHEBI:30616"/>
    </ligand>
</feature>
<feature type="sequence conflict" description="In Ref. 1; AAB19235." evidence="6" ref="1">
    <original>KQ</original>
    <variation>NE</variation>
    <location>
        <begin position="480"/>
        <end position="481"/>
    </location>
</feature>